<accession>P50476</accession>
<accession>A5PKP7</accession>
<protein>
    <recommendedName>
        <fullName>Homeobox protein XHOX-3</fullName>
    </recommendedName>
</protein>
<keyword id="KW-0217">Developmental protein</keyword>
<keyword id="KW-0238">DNA-binding</keyword>
<keyword id="KW-0371">Homeobox</keyword>
<keyword id="KW-0539">Nucleus</keyword>
<keyword id="KW-1185">Reference proteome</keyword>
<keyword id="KW-0804">Transcription</keyword>
<keyword id="KW-0805">Transcription regulation</keyword>
<organism>
    <name type="scientific">Xenopus laevis</name>
    <name type="common">African clawed frog</name>
    <dbReference type="NCBI Taxonomy" id="8355"/>
    <lineage>
        <taxon>Eukaryota</taxon>
        <taxon>Metazoa</taxon>
        <taxon>Chordata</taxon>
        <taxon>Craniata</taxon>
        <taxon>Vertebrata</taxon>
        <taxon>Euteleostomi</taxon>
        <taxon>Amphibia</taxon>
        <taxon>Batrachia</taxon>
        <taxon>Anura</taxon>
        <taxon>Pipoidea</taxon>
        <taxon>Pipidae</taxon>
        <taxon>Xenopodinae</taxon>
        <taxon>Xenopus</taxon>
        <taxon>Xenopus</taxon>
    </lineage>
</organism>
<reference key="1">
    <citation type="journal article" date="1991" name="Dev. Growth Differ.">
        <title>Expression of the Xhox3 homeobox protein in Xenopus embryos: blocking its early function suggests the requirement of Xhox3 for normal posterior development.</title>
        <authorList>
            <person name="Ruiz i Altaba A."/>
            <person name="Choi T."/>
            <person name="Melton D.A."/>
        </authorList>
    </citation>
    <scope>NUCLEOTIDE SEQUENCE [MRNA]</scope>
</reference>
<reference key="2">
    <citation type="submission" date="2007-06" db="EMBL/GenBank/DDBJ databases">
        <authorList>
            <consortium name="NIH - Xenopus Gene Collection (XGC) project"/>
        </authorList>
    </citation>
    <scope>NUCLEOTIDE SEQUENCE [LARGE SCALE MRNA]</scope>
    <source>
        <tissue>Embryo</tissue>
    </source>
</reference>
<reference key="3">
    <citation type="journal article" date="1989" name="Development">
        <title>Bimodal and graded expression of the Xenopus homeobox gene Xhox3 during embryonic development.</title>
        <authorList>
            <person name="Ruiz i Altaba A."/>
            <person name="Melton D.A."/>
        </authorList>
    </citation>
    <scope>NUCLEOTIDE SEQUENCE [MRNA] OF 168-227</scope>
</reference>
<comment type="function">
    <text>May be required for posterior development and development of normal embryonic axial pattern.</text>
</comment>
<comment type="subcellular location">
    <subcellularLocation>
        <location>Nucleus</location>
    </subcellularLocation>
</comment>
<comment type="developmental stage">
    <text>It is first expressed at the midblastula transition and is maximally expressed at the late gastrula-early neurula stage. It is expressed in two distinct periods, the early period is characterized by an anteroposterior graded expression in the mesoderm with the highest concentration at the posterior end. The late period begins at the tailbud stage and is characterized by new expression in the CNS, predominantly in the brain, and in addition it is also expressed in the tail bud at this stage.</text>
</comment>
<comment type="similarity">
    <text evidence="3">Belongs to the even-skipped homeobox family.</text>
</comment>
<gene>
    <name type="primary">xhox3</name>
</gene>
<evidence type="ECO:0000255" key="1">
    <source>
        <dbReference type="PROSITE-ProRule" id="PRU00108"/>
    </source>
</evidence>
<evidence type="ECO:0000256" key="2">
    <source>
        <dbReference type="SAM" id="MobiDB-lite"/>
    </source>
</evidence>
<evidence type="ECO:0000305" key="3"/>
<dbReference type="EMBL" id="D10455">
    <property type="protein sequence ID" value="BAA01250.1"/>
    <property type="molecule type" value="mRNA"/>
</dbReference>
<dbReference type="EMBL" id="BC142567">
    <property type="protein sequence ID" value="AAI42568.1"/>
    <property type="molecule type" value="mRNA"/>
</dbReference>
<dbReference type="PIR" id="A60092">
    <property type="entry name" value="A60092"/>
</dbReference>
<dbReference type="RefSeq" id="NP_001084320.1">
    <property type="nucleotide sequence ID" value="NM_001090851.1"/>
</dbReference>
<dbReference type="SMR" id="P50476"/>
<dbReference type="GeneID" id="399437"/>
<dbReference type="KEGG" id="xla:399437"/>
<dbReference type="AGR" id="Xenbase:XB-GENE-865004"/>
<dbReference type="CTD" id="399437"/>
<dbReference type="Xenbase" id="XB-GENE-865004">
    <property type="gene designation" value="evx1.L"/>
</dbReference>
<dbReference type="OrthoDB" id="6159439at2759"/>
<dbReference type="Proteomes" id="UP000186698">
    <property type="component" value="Chromosome 6L"/>
</dbReference>
<dbReference type="Bgee" id="399437">
    <property type="expression patterns" value="Expressed in neurula embryo and 2 other cell types or tissues"/>
</dbReference>
<dbReference type="GO" id="GO:0005634">
    <property type="term" value="C:nucleus"/>
    <property type="evidence" value="ECO:0000318"/>
    <property type="project" value="GO_Central"/>
</dbReference>
<dbReference type="GO" id="GO:0000981">
    <property type="term" value="F:DNA-binding transcription factor activity, RNA polymerase II-specific"/>
    <property type="evidence" value="ECO:0000318"/>
    <property type="project" value="GO_Central"/>
</dbReference>
<dbReference type="GO" id="GO:0000978">
    <property type="term" value="F:RNA polymerase II cis-regulatory region sequence-specific DNA binding"/>
    <property type="evidence" value="ECO:0000318"/>
    <property type="project" value="GO_Central"/>
</dbReference>
<dbReference type="GO" id="GO:0006357">
    <property type="term" value="P:regulation of transcription by RNA polymerase II"/>
    <property type="evidence" value="ECO:0000318"/>
    <property type="project" value="GO_Central"/>
</dbReference>
<dbReference type="CDD" id="cd00086">
    <property type="entry name" value="homeodomain"/>
    <property type="match status" value="1"/>
</dbReference>
<dbReference type="FunFam" id="1.10.10.60:FF:000256">
    <property type="entry name" value="Even-skipped homeobox 1"/>
    <property type="match status" value="1"/>
</dbReference>
<dbReference type="Gene3D" id="1.10.10.60">
    <property type="entry name" value="Homeodomain-like"/>
    <property type="match status" value="1"/>
</dbReference>
<dbReference type="InterPro" id="IPR052002">
    <property type="entry name" value="Even-skipped_HD"/>
</dbReference>
<dbReference type="InterPro" id="IPR001356">
    <property type="entry name" value="HD"/>
</dbReference>
<dbReference type="InterPro" id="IPR020479">
    <property type="entry name" value="HD_metazoa"/>
</dbReference>
<dbReference type="InterPro" id="IPR017970">
    <property type="entry name" value="Homeobox_CS"/>
</dbReference>
<dbReference type="InterPro" id="IPR009057">
    <property type="entry name" value="Homeodomain-like_sf"/>
</dbReference>
<dbReference type="PANTHER" id="PTHR46294:SF2">
    <property type="entry name" value="HOMEOBOX EVEN-SKIPPED HOMOLOG PROTEIN 1"/>
    <property type="match status" value="1"/>
</dbReference>
<dbReference type="PANTHER" id="PTHR46294">
    <property type="entry name" value="SEGMENTATION PROTEIN EVEN-SKIPPED"/>
    <property type="match status" value="1"/>
</dbReference>
<dbReference type="Pfam" id="PF00046">
    <property type="entry name" value="Homeodomain"/>
    <property type="match status" value="1"/>
</dbReference>
<dbReference type="PRINTS" id="PR00024">
    <property type="entry name" value="HOMEOBOX"/>
</dbReference>
<dbReference type="SMART" id="SM00389">
    <property type="entry name" value="HOX"/>
    <property type="match status" value="1"/>
</dbReference>
<dbReference type="SUPFAM" id="SSF46689">
    <property type="entry name" value="Homeodomain-like"/>
    <property type="match status" value="1"/>
</dbReference>
<dbReference type="PROSITE" id="PS00027">
    <property type="entry name" value="HOMEOBOX_1"/>
    <property type="match status" value="1"/>
</dbReference>
<dbReference type="PROSITE" id="PS50071">
    <property type="entry name" value="HOMEOBOX_2"/>
    <property type="match status" value="1"/>
</dbReference>
<name>HOX3_XENLA</name>
<feature type="chain" id="PRO_0000049144" description="Homeobox protein XHOX-3">
    <location>
        <begin position="1"/>
        <end position="388"/>
    </location>
</feature>
<feature type="DNA-binding region" description="Homeobox" evidence="1">
    <location>
        <begin position="168"/>
        <end position="227"/>
    </location>
</feature>
<feature type="region of interest" description="Disordered" evidence="2">
    <location>
        <begin position="30"/>
        <end position="109"/>
    </location>
</feature>
<feature type="region of interest" description="Disordered" evidence="2">
    <location>
        <begin position="131"/>
        <end position="163"/>
    </location>
</feature>
<feature type="compositionally biased region" description="Polar residues" evidence="2">
    <location>
        <begin position="68"/>
        <end position="81"/>
    </location>
</feature>
<feature type="compositionally biased region" description="Polar residues" evidence="2">
    <location>
        <begin position="91"/>
        <end position="103"/>
    </location>
</feature>
<proteinExistence type="evidence at transcript level"/>
<sequence length="388" mass="42023">MEGRKEMLMYLEGGQLGTLVGKRMAHLSDAVGSPMAESQDKLVPKSPRAGPIAPTDRAEESEVEVGQATGQQRSRSPQLRISSPHPPAHSDSLSTKGQHSSSDTESDFYEEIEVSCTPDCNSAASDYQQHSAGQCSEPMGGSPVNGSDSSKGGGGSHGSFSACAGDQMRRYRTAFTREQIARLEKEFYRENYVSRPRRCELAAALNLPETTIKVWFQNRRMKDKRQRLAMTWPHPADPAFYTYMMSHAAATGNLPYPFPSHLPLPYYSHMGISAGSTAAATPFSAPLRPLDTFRVLSHPYPRPDLLCAFRHPSIYASPAHGLGSGGSPCSCLACLSTSTNGLGQRAAASDFTCSSTSRSDSFLTFTPSILSKSSSVSLDQREEVPLTR</sequence>